<feature type="chain" id="PRO_0000062253" description="Large ribosomal subunit protein uL16">
    <location>
        <begin position="1"/>
        <end position="137"/>
    </location>
</feature>
<reference key="1">
    <citation type="journal article" date="2002" name="Nature">
        <title>Comparison of the genomes of two Xanthomonas pathogens with differing host specificities.</title>
        <authorList>
            <person name="da Silva A.C.R."/>
            <person name="Ferro J.A."/>
            <person name="Reinach F.C."/>
            <person name="Farah C.S."/>
            <person name="Furlan L.R."/>
            <person name="Quaggio R.B."/>
            <person name="Monteiro-Vitorello C.B."/>
            <person name="Van Sluys M.A."/>
            <person name="Almeida N.F. Jr."/>
            <person name="Alves L.M.C."/>
            <person name="do Amaral A.M."/>
            <person name="Bertolini M.C."/>
            <person name="Camargo L.E.A."/>
            <person name="Camarotte G."/>
            <person name="Cannavan F."/>
            <person name="Cardozo J."/>
            <person name="Chambergo F."/>
            <person name="Ciapina L.P."/>
            <person name="Cicarelli R.M.B."/>
            <person name="Coutinho L.L."/>
            <person name="Cursino-Santos J.R."/>
            <person name="El-Dorry H."/>
            <person name="Faria J.B."/>
            <person name="Ferreira A.J.S."/>
            <person name="Ferreira R.C.C."/>
            <person name="Ferro M.I.T."/>
            <person name="Formighieri E.F."/>
            <person name="Franco M.C."/>
            <person name="Greggio C.C."/>
            <person name="Gruber A."/>
            <person name="Katsuyama A.M."/>
            <person name="Kishi L.T."/>
            <person name="Leite R.P."/>
            <person name="Lemos E.G.M."/>
            <person name="Lemos M.V.F."/>
            <person name="Locali E.C."/>
            <person name="Machado M.A."/>
            <person name="Madeira A.M.B.N."/>
            <person name="Martinez-Rossi N.M."/>
            <person name="Martins E.C."/>
            <person name="Meidanis J."/>
            <person name="Menck C.F.M."/>
            <person name="Miyaki C.Y."/>
            <person name="Moon D.H."/>
            <person name="Moreira L.M."/>
            <person name="Novo M.T.M."/>
            <person name="Okura V.K."/>
            <person name="Oliveira M.C."/>
            <person name="Oliveira V.R."/>
            <person name="Pereira H.A."/>
            <person name="Rossi A."/>
            <person name="Sena J.A.D."/>
            <person name="Silva C."/>
            <person name="de Souza R.F."/>
            <person name="Spinola L.A.F."/>
            <person name="Takita M.A."/>
            <person name="Tamura R.E."/>
            <person name="Teixeira E.C."/>
            <person name="Tezza R.I.D."/>
            <person name="Trindade dos Santos M."/>
            <person name="Truffi D."/>
            <person name="Tsai S.M."/>
            <person name="White F.F."/>
            <person name="Setubal J.C."/>
            <person name="Kitajima J.P."/>
        </authorList>
    </citation>
    <scope>NUCLEOTIDE SEQUENCE [LARGE SCALE GENOMIC DNA]</scope>
    <source>
        <strain>306</strain>
    </source>
</reference>
<keyword id="KW-0687">Ribonucleoprotein</keyword>
<keyword id="KW-0689">Ribosomal protein</keyword>
<keyword id="KW-0694">RNA-binding</keyword>
<keyword id="KW-0699">rRNA-binding</keyword>
<keyword id="KW-0820">tRNA-binding</keyword>
<dbReference type="EMBL" id="AE008923">
    <property type="protein sequence ID" value="AAM35862.1"/>
    <property type="molecule type" value="Genomic_DNA"/>
</dbReference>
<dbReference type="RefSeq" id="WP_003486706.1">
    <property type="nucleotide sequence ID" value="NC_003919.1"/>
</dbReference>
<dbReference type="SMR" id="Q8PNR8"/>
<dbReference type="GeneID" id="97509343"/>
<dbReference type="KEGG" id="xac:XAC0979"/>
<dbReference type="eggNOG" id="COG0197">
    <property type="taxonomic scope" value="Bacteria"/>
</dbReference>
<dbReference type="HOGENOM" id="CLU_078858_2_1_6"/>
<dbReference type="Proteomes" id="UP000000576">
    <property type="component" value="Chromosome"/>
</dbReference>
<dbReference type="GO" id="GO:0022625">
    <property type="term" value="C:cytosolic large ribosomal subunit"/>
    <property type="evidence" value="ECO:0007669"/>
    <property type="project" value="TreeGrafter"/>
</dbReference>
<dbReference type="GO" id="GO:0019843">
    <property type="term" value="F:rRNA binding"/>
    <property type="evidence" value="ECO:0007669"/>
    <property type="project" value="UniProtKB-UniRule"/>
</dbReference>
<dbReference type="GO" id="GO:0003735">
    <property type="term" value="F:structural constituent of ribosome"/>
    <property type="evidence" value="ECO:0007669"/>
    <property type="project" value="InterPro"/>
</dbReference>
<dbReference type="GO" id="GO:0000049">
    <property type="term" value="F:tRNA binding"/>
    <property type="evidence" value="ECO:0007669"/>
    <property type="project" value="UniProtKB-KW"/>
</dbReference>
<dbReference type="GO" id="GO:0006412">
    <property type="term" value="P:translation"/>
    <property type="evidence" value="ECO:0007669"/>
    <property type="project" value="UniProtKB-UniRule"/>
</dbReference>
<dbReference type="CDD" id="cd01433">
    <property type="entry name" value="Ribosomal_L16_L10e"/>
    <property type="match status" value="1"/>
</dbReference>
<dbReference type="FunFam" id="3.90.1170.10:FF:000001">
    <property type="entry name" value="50S ribosomal protein L16"/>
    <property type="match status" value="1"/>
</dbReference>
<dbReference type="Gene3D" id="3.90.1170.10">
    <property type="entry name" value="Ribosomal protein L10e/L16"/>
    <property type="match status" value="1"/>
</dbReference>
<dbReference type="HAMAP" id="MF_01342">
    <property type="entry name" value="Ribosomal_uL16"/>
    <property type="match status" value="1"/>
</dbReference>
<dbReference type="InterPro" id="IPR047873">
    <property type="entry name" value="Ribosomal_uL16"/>
</dbReference>
<dbReference type="InterPro" id="IPR000114">
    <property type="entry name" value="Ribosomal_uL16_bact-type"/>
</dbReference>
<dbReference type="InterPro" id="IPR020798">
    <property type="entry name" value="Ribosomal_uL16_CS"/>
</dbReference>
<dbReference type="InterPro" id="IPR016180">
    <property type="entry name" value="Ribosomal_uL16_dom"/>
</dbReference>
<dbReference type="InterPro" id="IPR036920">
    <property type="entry name" value="Ribosomal_uL16_sf"/>
</dbReference>
<dbReference type="NCBIfam" id="TIGR01164">
    <property type="entry name" value="rplP_bact"/>
    <property type="match status" value="1"/>
</dbReference>
<dbReference type="PANTHER" id="PTHR12220">
    <property type="entry name" value="50S/60S RIBOSOMAL PROTEIN L16"/>
    <property type="match status" value="1"/>
</dbReference>
<dbReference type="PANTHER" id="PTHR12220:SF13">
    <property type="entry name" value="LARGE RIBOSOMAL SUBUNIT PROTEIN UL16M"/>
    <property type="match status" value="1"/>
</dbReference>
<dbReference type="Pfam" id="PF00252">
    <property type="entry name" value="Ribosomal_L16"/>
    <property type="match status" value="1"/>
</dbReference>
<dbReference type="PRINTS" id="PR00060">
    <property type="entry name" value="RIBOSOMALL16"/>
</dbReference>
<dbReference type="SUPFAM" id="SSF54686">
    <property type="entry name" value="Ribosomal protein L16p/L10e"/>
    <property type="match status" value="1"/>
</dbReference>
<dbReference type="PROSITE" id="PS00586">
    <property type="entry name" value="RIBOSOMAL_L16_1"/>
    <property type="match status" value="1"/>
</dbReference>
<dbReference type="PROSITE" id="PS00701">
    <property type="entry name" value="RIBOSOMAL_L16_2"/>
    <property type="match status" value="1"/>
</dbReference>
<comment type="function">
    <text evidence="1">Binds 23S rRNA and is also seen to make contacts with the A and possibly P site tRNAs.</text>
</comment>
<comment type="subunit">
    <text evidence="1">Part of the 50S ribosomal subunit.</text>
</comment>
<comment type="similarity">
    <text evidence="1">Belongs to the universal ribosomal protein uL16 family.</text>
</comment>
<proteinExistence type="inferred from homology"/>
<gene>
    <name evidence="1" type="primary">rplP</name>
    <name type="ordered locus">XAC0979</name>
</gene>
<sequence length="137" mass="15499">MLQPKRTKYRKMHKGRNDGLAWSGNAVSFGEYGLKATAHGQLTARQIEAARRTISRHVKKGGKMWIRVFPDKPITKKPIEVRMGSGKGNVEYWVAQIQPGRMIYEIEGIPEETAREAFRLAAAKLSVTTTFVTRTVR</sequence>
<organism>
    <name type="scientific">Xanthomonas axonopodis pv. citri (strain 306)</name>
    <dbReference type="NCBI Taxonomy" id="190486"/>
    <lineage>
        <taxon>Bacteria</taxon>
        <taxon>Pseudomonadati</taxon>
        <taxon>Pseudomonadota</taxon>
        <taxon>Gammaproteobacteria</taxon>
        <taxon>Lysobacterales</taxon>
        <taxon>Lysobacteraceae</taxon>
        <taxon>Xanthomonas</taxon>
    </lineage>
</organism>
<name>RL16_XANAC</name>
<accession>Q8PNR8</accession>
<evidence type="ECO:0000255" key="1">
    <source>
        <dbReference type="HAMAP-Rule" id="MF_01342"/>
    </source>
</evidence>
<evidence type="ECO:0000305" key="2"/>
<protein>
    <recommendedName>
        <fullName evidence="1">Large ribosomal subunit protein uL16</fullName>
    </recommendedName>
    <alternativeName>
        <fullName evidence="2">50S ribosomal protein L16</fullName>
    </alternativeName>
</protein>